<proteinExistence type="inferred from homology"/>
<reference key="1">
    <citation type="journal article" date="2011" name="J. Bacteriol.">
        <title>Genome sequence of Thermotoga sp. strain RQ2, a hyperthermophilic bacterium isolated from a geothermally heated region of the seafloor near Ribeira Quente, the Azores.</title>
        <authorList>
            <person name="Swithers K.S."/>
            <person name="DiPippo J.L."/>
            <person name="Bruce D.C."/>
            <person name="Detter C."/>
            <person name="Tapia R."/>
            <person name="Han S."/>
            <person name="Saunders E."/>
            <person name="Goodwin L.A."/>
            <person name="Han J."/>
            <person name="Woyke T."/>
            <person name="Pitluck S."/>
            <person name="Pennacchio L."/>
            <person name="Nolan M."/>
            <person name="Mikhailova N."/>
            <person name="Lykidis A."/>
            <person name="Land M.L."/>
            <person name="Brettin T."/>
            <person name="Stetter K.O."/>
            <person name="Nelson K.E."/>
            <person name="Gogarten J.P."/>
            <person name="Noll K.M."/>
        </authorList>
    </citation>
    <scope>NUCLEOTIDE SEQUENCE [LARGE SCALE GENOMIC DNA]</scope>
    <source>
        <strain>RQ2</strain>
    </source>
</reference>
<keyword id="KW-0687">Ribonucleoprotein</keyword>
<keyword id="KW-0689">Ribosomal protein</keyword>
<keyword id="KW-0694">RNA-binding</keyword>
<keyword id="KW-0699">rRNA-binding</keyword>
<organism>
    <name type="scientific">Thermotoga sp. (strain RQ2)</name>
    <dbReference type="NCBI Taxonomy" id="126740"/>
    <lineage>
        <taxon>Bacteria</taxon>
        <taxon>Thermotogati</taxon>
        <taxon>Thermotogota</taxon>
        <taxon>Thermotogae</taxon>
        <taxon>Thermotogales</taxon>
        <taxon>Thermotogaceae</taxon>
        <taxon>Thermotoga</taxon>
    </lineage>
</organism>
<protein>
    <recommendedName>
        <fullName evidence="1">Small ribosomal subunit protein bS6</fullName>
    </recommendedName>
    <alternativeName>
        <fullName evidence="2">30S ribosomal protein S6</fullName>
    </alternativeName>
</protein>
<name>RS6_THESQ</name>
<dbReference type="EMBL" id="CP000969">
    <property type="protein sequence ID" value="ACB08689.1"/>
    <property type="molecule type" value="Genomic_DNA"/>
</dbReference>
<dbReference type="RefSeq" id="WP_012310477.1">
    <property type="nucleotide sequence ID" value="NC_010483.1"/>
</dbReference>
<dbReference type="SMR" id="B1L8K7"/>
<dbReference type="KEGG" id="trq:TRQ2_0333"/>
<dbReference type="HOGENOM" id="CLU_113441_5_0_0"/>
<dbReference type="Proteomes" id="UP000001687">
    <property type="component" value="Chromosome"/>
</dbReference>
<dbReference type="GO" id="GO:0005737">
    <property type="term" value="C:cytoplasm"/>
    <property type="evidence" value="ECO:0007669"/>
    <property type="project" value="UniProtKB-ARBA"/>
</dbReference>
<dbReference type="GO" id="GO:1990904">
    <property type="term" value="C:ribonucleoprotein complex"/>
    <property type="evidence" value="ECO:0007669"/>
    <property type="project" value="UniProtKB-KW"/>
</dbReference>
<dbReference type="GO" id="GO:0005840">
    <property type="term" value="C:ribosome"/>
    <property type="evidence" value="ECO:0007669"/>
    <property type="project" value="UniProtKB-KW"/>
</dbReference>
<dbReference type="GO" id="GO:0070181">
    <property type="term" value="F:small ribosomal subunit rRNA binding"/>
    <property type="evidence" value="ECO:0007669"/>
    <property type="project" value="TreeGrafter"/>
</dbReference>
<dbReference type="GO" id="GO:0003735">
    <property type="term" value="F:structural constituent of ribosome"/>
    <property type="evidence" value="ECO:0007669"/>
    <property type="project" value="InterPro"/>
</dbReference>
<dbReference type="GO" id="GO:0006412">
    <property type="term" value="P:translation"/>
    <property type="evidence" value="ECO:0007669"/>
    <property type="project" value="UniProtKB-UniRule"/>
</dbReference>
<dbReference type="CDD" id="cd00473">
    <property type="entry name" value="bS6"/>
    <property type="match status" value="1"/>
</dbReference>
<dbReference type="Gene3D" id="3.30.70.60">
    <property type="match status" value="1"/>
</dbReference>
<dbReference type="HAMAP" id="MF_00360">
    <property type="entry name" value="Ribosomal_bS6"/>
    <property type="match status" value="1"/>
</dbReference>
<dbReference type="InterPro" id="IPR000529">
    <property type="entry name" value="Ribosomal_bS6"/>
</dbReference>
<dbReference type="InterPro" id="IPR035980">
    <property type="entry name" value="Ribosomal_bS6_sf"/>
</dbReference>
<dbReference type="InterPro" id="IPR020814">
    <property type="entry name" value="Ribosomal_S6_plastid/chlpt"/>
</dbReference>
<dbReference type="InterPro" id="IPR014717">
    <property type="entry name" value="Transl_elong_EF1B/ribsomal_bS6"/>
</dbReference>
<dbReference type="NCBIfam" id="TIGR00166">
    <property type="entry name" value="S6"/>
    <property type="match status" value="1"/>
</dbReference>
<dbReference type="PANTHER" id="PTHR21011">
    <property type="entry name" value="MITOCHONDRIAL 28S RIBOSOMAL PROTEIN S6"/>
    <property type="match status" value="1"/>
</dbReference>
<dbReference type="PANTHER" id="PTHR21011:SF1">
    <property type="entry name" value="SMALL RIBOSOMAL SUBUNIT PROTEIN BS6M"/>
    <property type="match status" value="1"/>
</dbReference>
<dbReference type="Pfam" id="PF01250">
    <property type="entry name" value="Ribosomal_S6"/>
    <property type="match status" value="1"/>
</dbReference>
<dbReference type="SUPFAM" id="SSF54995">
    <property type="entry name" value="Ribosomal protein S6"/>
    <property type="match status" value="1"/>
</dbReference>
<gene>
    <name evidence="1" type="primary">rpsF</name>
    <name type="ordered locus">TRQ2_0333</name>
</gene>
<sequence length="128" mass="15291">MAYVKERIYESMFIIAPNVPEEEREKLVERVKGIIEERVKGKIDKVERMGMRKFAYEIKKFSEGDYTVIYFRCDGQHLQELENFYRITPEIIRWQTFRRFDLEKKERKAQREKAAAEAIESSEGGSEA</sequence>
<accession>B1L8K7</accession>
<feature type="chain" id="PRO_1000120818" description="Small ribosomal subunit protein bS6">
    <location>
        <begin position="1"/>
        <end position="128"/>
    </location>
</feature>
<evidence type="ECO:0000255" key="1">
    <source>
        <dbReference type="HAMAP-Rule" id="MF_00360"/>
    </source>
</evidence>
<evidence type="ECO:0000305" key="2"/>
<comment type="function">
    <text evidence="1">Binds together with bS18 to 16S ribosomal RNA.</text>
</comment>
<comment type="similarity">
    <text evidence="1">Belongs to the bacterial ribosomal protein bS6 family.</text>
</comment>